<proteinExistence type="inferred from homology"/>
<dbReference type="EC" id="6.1.1.17" evidence="1"/>
<dbReference type="EMBL" id="CP000774">
    <property type="protein sequence ID" value="ABS62725.1"/>
    <property type="molecule type" value="Genomic_DNA"/>
</dbReference>
<dbReference type="RefSeq" id="WP_012109981.1">
    <property type="nucleotide sequence ID" value="NC_009719.1"/>
</dbReference>
<dbReference type="SMR" id="A7HS42"/>
<dbReference type="STRING" id="402881.Plav_1104"/>
<dbReference type="KEGG" id="pla:Plav_1104"/>
<dbReference type="eggNOG" id="COG0008">
    <property type="taxonomic scope" value="Bacteria"/>
</dbReference>
<dbReference type="HOGENOM" id="CLU_015768_6_1_5"/>
<dbReference type="OrthoDB" id="9807503at2"/>
<dbReference type="Proteomes" id="UP000006377">
    <property type="component" value="Chromosome"/>
</dbReference>
<dbReference type="GO" id="GO:0005737">
    <property type="term" value="C:cytoplasm"/>
    <property type="evidence" value="ECO:0007669"/>
    <property type="project" value="UniProtKB-SubCell"/>
</dbReference>
<dbReference type="GO" id="GO:0005524">
    <property type="term" value="F:ATP binding"/>
    <property type="evidence" value="ECO:0007669"/>
    <property type="project" value="UniProtKB-UniRule"/>
</dbReference>
<dbReference type="GO" id="GO:0004818">
    <property type="term" value="F:glutamate-tRNA ligase activity"/>
    <property type="evidence" value="ECO:0007669"/>
    <property type="project" value="UniProtKB-UniRule"/>
</dbReference>
<dbReference type="GO" id="GO:0000049">
    <property type="term" value="F:tRNA binding"/>
    <property type="evidence" value="ECO:0007669"/>
    <property type="project" value="InterPro"/>
</dbReference>
<dbReference type="GO" id="GO:0006424">
    <property type="term" value="P:glutamyl-tRNA aminoacylation"/>
    <property type="evidence" value="ECO:0007669"/>
    <property type="project" value="UniProtKB-UniRule"/>
</dbReference>
<dbReference type="Gene3D" id="1.10.10.350">
    <property type="match status" value="1"/>
</dbReference>
<dbReference type="Gene3D" id="3.40.50.620">
    <property type="entry name" value="HUPs"/>
    <property type="match status" value="1"/>
</dbReference>
<dbReference type="HAMAP" id="MF_00022">
    <property type="entry name" value="Glu_tRNA_synth_type1"/>
    <property type="match status" value="1"/>
</dbReference>
<dbReference type="InterPro" id="IPR045462">
    <property type="entry name" value="aa-tRNA-synth_I_cd-bd"/>
</dbReference>
<dbReference type="InterPro" id="IPR020751">
    <property type="entry name" value="aa-tRNA-synth_I_codon-bd_sub2"/>
</dbReference>
<dbReference type="InterPro" id="IPR001412">
    <property type="entry name" value="aa-tRNA-synth_I_CS"/>
</dbReference>
<dbReference type="InterPro" id="IPR008925">
    <property type="entry name" value="aa_tRNA-synth_I_cd-bd_sf"/>
</dbReference>
<dbReference type="InterPro" id="IPR004527">
    <property type="entry name" value="Glu-tRNA-ligase_bac/mito"/>
</dbReference>
<dbReference type="InterPro" id="IPR000924">
    <property type="entry name" value="Glu/Gln-tRNA-synth"/>
</dbReference>
<dbReference type="InterPro" id="IPR020058">
    <property type="entry name" value="Glu/Gln-tRNA-synth_Ib_cat-dom"/>
</dbReference>
<dbReference type="InterPro" id="IPR049940">
    <property type="entry name" value="GluQ/Sye"/>
</dbReference>
<dbReference type="InterPro" id="IPR014729">
    <property type="entry name" value="Rossmann-like_a/b/a_fold"/>
</dbReference>
<dbReference type="NCBIfam" id="TIGR00464">
    <property type="entry name" value="gltX_bact"/>
    <property type="match status" value="1"/>
</dbReference>
<dbReference type="PANTHER" id="PTHR43311">
    <property type="entry name" value="GLUTAMATE--TRNA LIGASE"/>
    <property type="match status" value="1"/>
</dbReference>
<dbReference type="PANTHER" id="PTHR43311:SF2">
    <property type="entry name" value="GLUTAMATE--TRNA LIGASE, MITOCHONDRIAL-RELATED"/>
    <property type="match status" value="1"/>
</dbReference>
<dbReference type="Pfam" id="PF19269">
    <property type="entry name" value="Anticodon_2"/>
    <property type="match status" value="1"/>
</dbReference>
<dbReference type="Pfam" id="PF00749">
    <property type="entry name" value="tRNA-synt_1c"/>
    <property type="match status" value="1"/>
</dbReference>
<dbReference type="PRINTS" id="PR00987">
    <property type="entry name" value="TRNASYNTHGLU"/>
</dbReference>
<dbReference type="SUPFAM" id="SSF48163">
    <property type="entry name" value="An anticodon-binding domain of class I aminoacyl-tRNA synthetases"/>
    <property type="match status" value="1"/>
</dbReference>
<dbReference type="SUPFAM" id="SSF52374">
    <property type="entry name" value="Nucleotidylyl transferase"/>
    <property type="match status" value="1"/>
</dbReference>
<dbReference type="PROSITE" id="PS00178">
    <property type="entry name" value="AA_TRNA_LIGASE_I"/>
    <property type="match status" value="1"/>
</dbReference>
<keyword id="KW-0030">Aminoacyl-tRNA synthetase</keyword>
<keyword id="KW-0067">ATP-binding</keyword>
<keyword id="KW-0963">Cytoplasm</keyword>
<keyword id="KW-0436">Ligase</keyword>
<keyword id="KW-0547">Nucleotide-binding</keyword>
<keyword id="KW-0648">Protein biosynthesis</keyword>
<keyword id="KW-1185">Reference proteome</keyword>
<feature type="chain" id="PRO_0000367730" description="Glutamate--tRNA ligase 1">
    <location>
        <begin position="1"/>
        <end position="449"/>
    </location>
</feature>
<feature type="short sequence motif" description="'HIGH' region" evidence="1">
    <location>
        <begin position="11"/>
        <end position="21"/>
    </location>
</feature>
<feature type="short sequence motif" description="'KMSKS' region" evidence="1">
    <location>
        <begin position="242"/>
        <end position="246"/>
    </location>
</feature>
<feature type="binding site" evidence="1">
    <location>
        <position position="245"/>
    </location>
    <ligand>
        <name>ATP</name>
        <dbReference type="ChEBI" id="CHEBI:30616"/>
    </ligand>
</feature>
<name>SYE1_PARL1</name>
<sequence length="449" mass="49180">MSGAPVVRFAPSPTGSLHVGNARAALFNFLFARKNSGKFMLRMDDTDDERSTVEFAAGIEEDLTWLGLRHDLFARQSDRLAAYEAAAAKLKADGRLYPAYETAAELDRKRKRQMARGLPPVYDRAALALTDEDRAKLEAEGRKPHWRFRLDRVHTAFDDLVQGAVEVDGASLSDPVLIREDGRFLYTLPSVVDDIDFAVTHVIRGSDHITNTGVQIQIIRALGAEPPVYAHYSLLNGPEGKPLSKRDDAARFSLRALRDAGFEPMALNSLLARLGTPDAVEPCLSLDELAARFDISRLGRADIRFDPADLAKVNTACLHLMSYEEAKPRLAALGCDLGEAFWEAIKPNLILFSDAADWARVVEGPVEPVIENPDFAAAAAAALPPEPWDESTWALWTDAVKQATGAKGKALFMPLRLALTGLTHGPELKNLLPLIGRERASARLGGLTR</sequence>
<gene>
    <name evidence="1" type="primary">gltX1</name>
    <name type="ordered locus">Plav_1104</name>
</gene>
<reference key="1">
    <citation type="journal article" date="2011" name="Stand. Genomic Sci.">
        <title>Complete genome sequence of Parvibaculum lavamentivorans type strain (DS-1(T)).</title>
        <authorList>
            <person name="Schleheck D."/>
            <person name="Weiss M."/>
            <person name="Pitluck S."/>
            <person name="Bruce D."/>
            <person name="Land M.L."/>
            <person name="Han S."/>
            <person name="Saunders E."/>
            <person name="Tapia R."/>
            <person name="Detter C."/>
            <person name="Brettin T."/>
            <person name="Han J."/>
            <person name="Woyke T."/>
            <person name="Goodwin L."/>
            <person name="Pennacchio L."/>
            <person name="Nolan M."/>
            <person name="Cook A.M."/>
            <person name="Kjelleberg S."/>
            <person name="Thomas T."/>
        </authorList>
    </citation>
    <scope>NUCLEOTIDE SEQUENCE [LARGE SCALE GENOMIC DNA]</scope>
    <source>
        <strain>DS-1 / DSM 13023 / NCIMB 13966</strain>
    </source>
</reference>
<organism>
    <name type="scientific">Parvibaculum lavamentivorans (strain DS-1 / DSM 13023 / NCIMB 13966)</name>
    <dbReference type="NCBI Taxonomy" id="402881"/>
    <lineage>
        <taxon>Bacteria</taxon>
        <taxon>Pseudomonadati</taxon>
        <taxon>Pseudomonadota</taxon>
        <taxon>Alphaproteobacteria</taxon>
        <taxon>Hyphomicrobiales</taxon>
        <taxon>Parvibaculaceae</taxon>
        <taxon>Parvibaculum</taxon>
    </lineage>
</organism>
<comment type="function">
    <text evidence="1">Catalyzes the attachment of glutamate to tRNA(Glu) in a two-step reaction: glutamate is first activated by ATP to form Glu-AMP and then transferred to the acceptor end of tRNA(Glu).</text>
</comment>
<comment type="catalytic activity">
    <reaction evidence="1">
        <text>tRNA(Glu) + L-glutamate + ATP = L-glutamyl-tRNA(Glu) + AMP + diphosphate</text>
        <dbReference type="Rhea" id="RHEA:23540"/>
        <dbReference type="Rhea" id="RHEA-COMP:9663"/>
        <dbReference type="Rhea" id="RHEA-COMP:9680"/>
        <dbReference type="ChEBI" id="CHEBI:29985"/>
        <dbReference type="ChEBI" id="CHEBI:30616"/>
        <dbReference type="ChEBI" id="CHEBI:33019"/>
        <dbReference type="ChEBI" id="CHEBI:78442"/>
        <dbReference type="ChEBI" id="CHEBI:78520"/>
        <dbReference type="ChEBI" id="CHEBI:456215"/>
        <dbReference type="EC" id="6.1.1.17"/>
    </reaction>
</comment>
<comment type="subunit">
    <text evidence="1">Monomer.</text>
</comment>
<comment type="subcellular location">
    <subcellularLocation>
        <location evidence="1">Cytoplasm</location>
    </subcellularLocation>
</comment>
<comment type="similarity">
    <text evidence="1">Belongs to the class-I aminoacyl-tRNA synthetase family. Glutamate--tRNA ligase type 1 subfamily.</text>
</comment>
<evidence type="ECO:0000255" key="1">
    <source>
        <dbReference type="HAMAP-Rule" id="MF_00022"/>
    </source>
</evidence>
<accession>A7HS42</accession>
<protein>
    <recommendedName>
        <fullName evidence="1">Glutamate--tRNA ligase 1</fullName>
        <ecNumber evidence="1">6.1.1.17</ecNumber>
    </recommendedName>
    <alternativeName>
        <fullName evidence="1">Glutamyl-tRNA synthetase 1</fullName>
        <shortName evidence="1">GluRS 1</shortName>
    </alternativeName>
</protein>